<organism>
    <name type="scientific">Bos taurus</name>
    <name type="common">Bovine</name>
    <dbReference type="NCBI Taxonomy" id="9913"/>
    <lineage>
        <taxon>Eukaryota</taxon>
        <taxon>Metazoa</taxon>
        <taxon>Chordata</taxon>
        <taxon>Craniata</taxon>
        <taxon>Vertebrata</taxon>
        <taxon>Euteleostomi</taxon>
        <taxon>Mammalia</taxon>
        <taxon>Eutheria</taxon>
        <taxon>Laurasiatheria</taxon>
        <taxon>Artiodactyla</taxon>
        <taxon>Ruminantia</taxon>
        <taxon>Pecora</taxon>
        <taxon>Bovidae</taxon>
        <taxon>Bovinae</taxon>
        <taxon>Bos</taxon>
    </lineage>
</organism>
<gene>
    <name type="primary">GDI1</name>
    <name type="synonym">RABGDIA</name>
</gene>
<dbReference type="EMBL" id="D90103">
    <property type="protein sequence ID" value="BAA14134.1"/>
    <property type="molecule type" value="mRNA"/>
</dbReference>
<dbReference type="EMBL" id="BC123440">
    <property type="protein sequence ID" value="AAI23441.1"/>
    <property type="molecule type" value="mRNA"/>
</dbReference>
<dbReference type="PIR" id="A35652">
    <property type="entry name" value="A35652"/>
</dbReference>
<dbReference type="RefSeq" id="NP_776489.1">
    <property type="nucleotide sequence ID" value="NM_174064.3"/>
</dbReference>
<dbReference type="PDB" id="1D5T">
    <property type="method" value="X-ray"/>
    <property type="resolution" value="1.04 A"/>
    <property type="chains" value="A=1-431"/>
</dbReference>
<dbReference type="PDB" id="1GND">
    <property type="method" value="X-ray"/>
    <property type="resolution" value="1.81 A"/>
    <property type="chains" value="A=1-447"/>
</dbReference>
<dbReference type="PDB" id="1LV0">
    <property type="method" value="X-ray"/>
    <property type="resolution" value="2.00 A"/>
    <property type="chains" value="A=1-447"/>
</dbReference>
<dbReference type="PDBsum" id="1D5T"/>
<dbReference type="PDBsum" id="1GND"/>
<dbReference type="PDBsum" id="1LV0"/>
<dbReference type="SMR" id="P21856"/>
<dbReference type="DIP" id="DIP-82N"/>
<dbReference type="FunCoup" id="P21856">
    <property type="interactions" value="3893"/>
</dbReference>
<dbReference type="IntAct" id="P21856">
    <property type="interactions" value="1"/>
</dbReference>
<dbReference type="MINT" id="P21856"/>
<dbReference type="STRING" id="9913.ENSBTAP00000016093"/>
<dbReference type="PaxDb" id="9913-ENSBTAP00000016093"/>
<dbReference type="PeptideAtlas" id="P21856"/>
<dbReference type="Ensembl" id="ENSBTAT00000113225.1">
    <property type="protein sequence ID" value="ENSBTAP00000093072.1"/>
    <property type="gene ID" value="ENSBTAG00000012125.6"/>
</dbReference>
<dbReference type="GeneID" id="281188"/>
<dbReference type="KEGG" id="bta:281188"/>
<dbReference type="CTD" id="2664"/>
<dbReference type="VEuPathDB" id="HostDB:ENSBTAG00000012125"/>
<dbReference type="VGNC" id="VGNC:29307">
    <property type="gene designation" value="GDI1"/>
</dbReference>
<dbReference type="eggNOG" id="KOG1439">
    <property type="taxonomic scope" value="Eukaryota"/>
</dbReference>
<dbReference type="GeneTree" id="ENSGT00950000182994"/>
<dbReference type="HOGENOM" id="CLU_021695_0_0_1"/>
<dbReference type="InParanoid" id="P21856"/>
<dbReference type="OMA" id="GRICKVP"/>
<dbReference type="OrthoDB" id="9446342at2759"/>
<dbReference type="TreeFam" id="TF300449"/>
<dbReference type="Reactome" id="R-BTA-8876198">
    <property type="pathway name" value="RAB GEFs exchange GTP for GDP on RABs"/>
</dbReference>
<dbReference type="EvolutionaryTrace" id="P21856"/>
<dbReference type="Proteomes" id="UP000009136">
    <property type="component" value="Chromosome X"/>
</dbReference>
<dbReference type="Bgee" id="ENSBTAG00000012125">
    <property type="expression patterns" value="Expressed in Ammon's horn and 101 other cell types or tissues"/>
</dbReference>
<dbReference type="GO" id="GO:0005829">
    <property type="term" value="C:cytosol"/>
    <property type="evidence" value="ECO:0000314"/>
    <property type="project" value="UniProtKB"/>
</dbReference>
<dbReference type="GO" id="GO:0005794">
    <property type="term" value="C:Golgi apparatus"/>
    <property type="evidence" value="ECO:0007669"/>
    <property type="project" value="UniProtKB-SubCell"/>
</dbReference>
<dbReference type="GO" id="GO:0005096">
    <property type="term" value="F:GTPase activator activity"/>
    <property type="evidence" value="ECO:0007669"/>
    <property type="project" value="UniProtKB-KW"/>
</dbReference>
<dbReference type="GO" id="GO:0005093">
    <property type="term" value="F:Rab GDP-dissociation inhibitor activity"/>
    <property type="evidence" value="ECO:0000314"/>
    <property type="project" value="UniProtKB"/>
</dbReference>
<dbReference type="GO" id="GO:0050771">
    <property type="term" value="P:negative regulation of axonogenesis"/>
    <property type="evidence" value="ECO:0000250"/>
    <property type="project" value="UniProtKB"/>
</dbReference>
<dbReference type="GO" id="GO:0090315">
    <property type="term" value="P:negative regulation of protein targeting to membrane"/>
    <property type="evidence" value="ECO:0000315"/>
    <property type="project" value="UniProtKB"/>
</dbReference>
<dbReference type="GO" id="GO:0015031">
    <property type="term" value="P:protein transport"/>
    <property type="evidence" value="ECO:0007669"/>
    <property type="project" value="InterPro"/>
</dbReference>
<dbReference type="GO" id="GO:0032482">
    <property type="term" value="P:Rab protein signal transduction"/>
    <property type="evidence" value="ECO:0000315"/>
    <property type="project" value="UniProtKB"/>
</dbReference>
<dbReference type="GO" id="GO:0016192">
    <property type="term" value="P:vesicle-mediated transport"/>
    <property type="evidence" value="ECO:0000318"/>
    <property type="project" value="GO_Central"/>
</dbReference>
<dbReference type="FunFam" id="1.10.405.10:FF:000001">
    <property type="entry name" value="Rab GDP dissociation inhibitor"/>
    <property type="match status" value="1"/>
</dbReference>
<dbReference type="FunFam" id="3.30.519.10:FF:000005">
    <property type="entry name" value="Rab GDP dissociation inhibitor"/>
    <property type="match status" value="1"/>
</dbReference>
<dbReference type="FunFam" id="3.30.519.10:FF:000014">
    <property type="entry name" value="Rab GDP dissociation inhibitor"/>
    <property type="match status" value="1"/>
</dbReference>
<dbReference type="FunFam" id="3.50.50.60:FF:000158">
    <property type="entry name" value="Rab GDP dissociation inhibitor"/>
    <property type="match status" value="1"/>
</dbReference>
<dbReference type="FunFam" id="3.50.50.60:FF:000232">
    <property type="entry name" value="Rab GDP dissociation inhibitor"/>
    <property type="match status" value="1"/>
</dbReference>
<dbReference type="Gene3D" id="3.50.50.60">
    <property type="entry name" value="FAD/NAD(P)-binding domain"/>
    <property type="match status" value="1"/>
</dbReference>
<dbReference type="Gene3D" id="1.10.405.10">
    <property type="entry name" value="Guanine Nucleotide Dissociation Inhibitor, domain 1"/>
    <property type="match status" value="1"/>
</dbReference>
<dbReference type="Gene3D" id="3.30.519.10">
    <property type="entry name" value="Guanine Nucleotide Dissociation Inhibitor, domain 2"/>
    <property type="match status" value="1"/>
</dbReference>
<dbReference type="InterPro" id="IPR036188">
    <property type="entry name" value="FAD/NAD-bd_sf"/>
</dbReference>
<dbReference type="InterPro" id="IPR018203">
    <property type="entry name" value="GDP_dissociation_inhibitor"/>
</dbReference>
<dbReference type="InterPro" id="IPR000806">
    <property type="entry name" value="RabGDI"/>
</dbReference>
<dbReference type="PANTHER" id="PTHR11787:SF3">
    <property type="entry name" value="RAB GDP DISSOCIATION INHIBITOR ALPHA"/>
    <property type="match status" value="1"/>
</dbReference>
<dbReference type="PANTHER" id="PTHR11787">
    <property type="entry name" value="RAB GDP-DISSOCIATION INHIBITOR"/>
    <property type="match status" value="1"/>
</dbReference>
<dbReference type="Pfam" id="PF00996">
    <property type="entry name" value="GDI"/>
    <property type="match status" value="1"/>
</dbReference>
<dbReference type="PRINTS" id="PR00892">
    <property type="entry name" value="RABGDI"/>
</dbReference>
<dbReference type="PRINTS" id="PR00891">
    <property type="entry name" value="RABGDIREP"/>
</dbReference>
<dbReference type="SUPFAM" id="SSF51905">
    <property type="entry name" value="FAD/NAD(P)-binding domain"/>
    <property type="match status" value="2"/>
</dbReference>
<keyword id="KW-0002">3D-structure</keyword>
<keyword id="KW-0963">Cytoplasm</keyword>
<keyword id="KW-0333">Golgi apparatus</keyword>
<keyword id="KW-0343">GTPase activation</keyword>
<keyword id="KW-0597">Phosphoprotein</keyword>
<keyword id="KW-1185">Reference proteome</keyword>
<evidence type="ECO:0000250" key="1"/>
<evidence type="ECO:0000250" key="2">
    <source>
        <dbReference type="UniProtKB" id="P31150"/>
    </source>
</evidence>
<evidence type="ECO:0000250" key="3">
    <source>
        <dbReference type="UniProtKB" id="P50396"/>
    </source>
</evidence>
<evidence type="ECO:0000269" key="4">
    <source>
    </source>
</evidence>
<evidence type="ECO:0000269" key="5">
    <source>
    </source>
</evidence>
<evidence type="ECO:0000269" key="6">
    <source>
    </source>
</evidence>
<evidence type="ECO:0000305" key="7"/>
<evidence type="ECO:0007829" key="8">
    <source>
        <dbReference type="PDB" id="1D5T"/>
    </source>
</evidence>
<evidence type="ECO:0007829" key="9">
    <source>
        <dbReference type="PDB" id="1GND"/>
    </source>
</evidence>
<evidence type="ECO:0007829" key="10">
    <source>
        <dbReference type="PDB" id="1LV0"/>
    </source>
</evidence>
<reference key="1">
    <citation type="journal article" date="1990" name="Mol. Cell. Biol.">
        <title>Molecular cloning and characterization of a novel type of regulatory protein (GDI) for smg p25A, a ras p21-like GTP-binding protein.</title>
        <authorList>
            <person name="Matsui Y."/>
            <person name="Kikuchi A."/>
            <person name="Araki S."/>
            <person name="Hata Y."/>
            <person name="Kondo J."/>
            <person name="Teranishi Y."/>
            <person name="Takai Y."/>
        </authorList>
    </citation>
    <scope>NUCLEOTIDE SEQUENCE [MRNA]</scope>
</reference>
<reference key="2">
    <citation type="submission" date="2006-09" db="EMBL/GenBank/DDBJ databases">
        <authorList>
            <consortium name="NIH - Mammalian Gene Collection (MGC) project"/>
        </authorList>
    </citation>
    <scope>NUCLEOTIDE SEQUENCE [LARGE SCALE MRNA]</scope>
    <source>
        <strain>Hereford</strain>
        <tissue>Thalamus</tissue>
    </source>
</reference>
<reference key="3">
    <citation type="journal article" date="1991" name="Nature">
        <title>Analysis of choroideraemia gene.</title>
        <authorList>
            <person name="Fodor E."/>
            <person name="Lee R.T."/>
            <person name="O'Donnell J.J."/>
        </authorList>
    </citation>
    <scope>SIMILARITY TO CHOROIDEREMIA PROTEIN</scope>
</reference>
<reference key="4">
    <citation type="journal article" date="1996" name="Nature">
        <title>Structure and mutational analysis of Rab GDP-dissociation inhibitor.</title>
        <authorList>
            <person name="Schalk I."/>
            <person name="Zeng K."/>
            <person name="Wu S.-K."/>
            <person name="Stura E.A."/>
            <person name="Matteson J."/>
            <person name="Huang M."/>
            <person name="Tandon A."/>
            <person name="Wilson I.A."/>
            <person name="Balch W.E."/>
        </authorList>
    </citation>
    <scope>X-RAY CRYSTALLOGRAPHY (1.81 ANGSTROMS)</scope>
    <scope>INTERACTION WITH RAB3A</scope>
</reference>
<reference key="5">
    <citation type="journal article" date="2000" name="Traffic">
        <title>A new functional domain of guanine nucleotide dissociation inhibitor (alpha-GDI) involved in Rab recycling.</title>
        <authorList>
            <person name="Luan P."/>
            <person name="Heine A."/>
            <person name="Zeng K."/>
            <person name="Moyer B."/>
            <person name="Greasely S.E."/>
            <person name="Kuhn P."/>
            <person name="Balch W.E."/>
            <person name="Wilson I.A."/>
        </authorList>
    </citation>
    <scope>X-RAY CRYSTALLOGRAPHY (1.04 ANGSTROMS) OF 1-431</scope>
    <scope>FUNCTION</scope>
</reference>
<reference key="6">
    <citation type="journal article" date="2003" name="Structure">
        <title>Geranylgeranyl switching regulates GDI-Rab GTPase recycling.</title>
        <authorList>
            <person name="An Y."/>
            <person name="Shao Y."/>
            <person name="Alory C."/>
            <person name="Matteson J."/>
            <person name="Sakisaka T."/>
            <person name="Chen W."/>
            <person name="Gibbs R.A."/>
            <person name="Wilson I.A."/>
            <person name="Balch W.E."/>
        </authorList>
    </citation>
    <scope>X-RAY CRYSTALLOGRAPHY (2.0 ANGSTROMS)</scope>
    <scope>FUNCTION</scope>
    <scope>MUTAGENESIS OF LYS-89 AND PHE-431</scope>
</reference>
<feature type="chain" id="PRO_0000056669" description="Rab GDP dissociation inhibitor alpha">
    <location>
        <begin position="1"/>
        <end position="447"/>
    </location>
</feature>
<feature type="modified residue" description="Phosphoserine" evidence="3">
    <location>
        <position position="427"/>
    </location>
</feature>
<feature type="mutagenesis site" description="Strongly reduces dissociation of RAB3A from the membrane." evidence="5">
    <original>K</original>
    <variation>A</variation>
    <location>
        <position position="89"/>
    </location>
</feature>
<feature type="mutagenesis site" description="Strongly reduces dissociation of RAB3A from the membrane." evidence="5">
    <original>F</original>
    <variation>E</variation>
    <location>
        <position position="431"/>
    </location>
</feature>
<feature type="strand" evidence="8">
    <location>
        <begin position="6"/>
        <end position="10"/>
    </location>
</feature>
<feature type="helix" evidence="8">
    <location>
        <begin position="14"/>
        <end position="25"/>
    </location>
</feature>
<feature type="strand" evidence="8">
    <location>
        <begin position="30"/>
        <end position="33"/>
    </location>
</feature>
<feature type="strand" evidence="8">
    <location>
        <begin position="35"/>
        <end position="39"/>
    </location>
</feature>
<feature type="helix" evidence="10">
    <location>
        <begin position="41"/>
        <end position="43"/>
    </location>
</feature>
<feature type="helix" evidence="8">
    <location>
        <begin position="49"/>
        <end position="55"/>
    </location>
</feature>
<feature type="helix" evidence="8">
    <location>
        <begin position="64"/>
        <end position="66"/>
    </location>
</feature>
<feature type="helix" evidence="8">
    <location>
        <begin position="69"/>
        <end position="71"/>
    </location>
</feature>
<feature type="strand" evidence="8">
    <location>
        <begin position="74"/>
        <end position="77"/>
    </location>
</feature>
<feature type="strand" evidence="8">
    <location>
        <begin position="80"/>
        <end position="82"/>
    </location>
</feature>
<feature type="helix" evidence="8">
    <location>
        <begin position="86"/>
        <end position="94"/>
    </location>
</feature>
<feature type="helix" evidence="8">
    <location>
        <begin position="96"/>
        <end position="99"/>
    </location>
</feature>
<feature type="strand" evidence="8">
    <location>
        <begin position="102"/>
        <end position="104"/>
    </location>
</feature>
<feature type="strand" evidence="8">
    <location>
        <begin position="107"/>
        <end position="112"/>
    </location>
</feature>
<feature type="strand" evidence="8">
    <location>
        <begin position="115"/>
        <end position="118"/>
    </location>
</feature>
<feature type="helix" evidence="8">
    <location>
        <begin position="123"/>
        <end position="128"/>
    </location>
</feature>
<feature type="strand" evidence="8">
    <location>
        <begin position="130"/>
        <end position="132"/>
    </location>
</feature>
<feature type="helix" evidence="8">
    <location>
        <begin position="134"/>
        <end position="149"/>
    </location>
</feature>
<feature type="helix" evidence="8">
    <location>
        <begin position="155"/>
        <end position="158"/>
    </location>
</feature>
<feature type="turn" evidence="8">
    <location>
        <begin position="163"/>
        <end position="165"/>
    </location>
</feature>
<feature type="helix" evidence="8">
    <location>
        <begin position="168"/>
        <end position="174"/>
    </location>
</feature>
<feature type="helix" evidence="8">
    <location>
        <begin position="179"/>
        <end position="188"/>
    </location>
</feature>
<feature type="strand" evidence="8">
    <location>
        <begin position="193"/>
        <end position="195"/>
    </location>
</feature>
<feature type="helix" evidence="8">
    <location>
        <begin position="196"/>
        <end position="199"/>
    </location>
</feature>
<feature type="strand" evidence="8">
    <location>
        <begin position="200"/>
        <end position="202"/>
    </location>
</feature>
<feature type="helix" evidence="8">
    <location>
        <begin position="203"/>
        <end position="214"/>
    </location>
</feature>
<feature type="strand" evidence="8">
    <location>
        <begin position="218"/>
        <end position="220"/>
    </location>
</feature>
<feature type="strand" evidence="8">
    <location>
        <begin position="223"/>
        <end position="227"/>
    </location>
</feature>
<feature type="helix" evidence="8">
    <location>
        <begin position="233"/>
        <end position="245"/>
    </location>
</feature>
<feature type="strand" evidence="9">
    <location>
        <begin position="248"/>
        <end position="252"/>
    </location>
</feature>
<feature type="strand" evidence="8">
    <location>
        <begin position="257"/>
        <end position="261"/>
    </location>
</feature>
<feature type="strand" evidence="8">
    <location>
        <begin position="264"/>
        <end position="270"/>
    </location>
</feature>
<feature type="strand" evidence="8">
    <location>
        <begin position="273"/>
        <end position="276"/>
    </location>
</feature>
<feature type="strand" evidence="8">
    <location>
        <begin position="278"/>
        <end position="282"/>
    </location>
</feature>
<feature type="helix" evidence="8">
    <location>
        <begin position="284"/>
        <end position="286"/>
    </location>
</feature>
<feature type="helix" evidence="8">
    <location>
        <begin position="288"/>
        <end position="290"/>
    </location>
</feature>
<feature type="strand" evidence="8">
    <location>
        <begin position="291"/>
        <end position="306"/>
    </location>
</feature>
<feature type="strand" evidence="9">
    <location>
        <begin position="311"/>
        <end position="313"/>
    </location>
</feature>
<feature type="strand" evidence="8">
    <location>
        <begin position="315"/>
        <end position="321"/>
    </location>
</feature>
<feature type="helix" evidence="8">
    <location>
        <begin position="323"/>
        <end position="325"/>
    </location>
</feature>
<feature type="strand" evidence="8">
    <location>
        <begin position="332"/>
        <end position="338"/>
    </location>
</feature>
<feature type="helix" evidence="8">
    <location>
        <begin position="339"/>
        <end position="341"/>
    </location>
</feature>
<feature type="strand" evidence="8">
    <location>
        <begin position="349"/>
        <end position="356"/>
    </location>
</feature>
<feature type="helix" evidence="8">
    <location>
        <begin position="362"/>
        <end position="365"/>
    </location>
</feature>
<feature type="helix" evidence="8">
    <location>
        <begin position="367"/>
        <end position="370"/>
    </location>
</feature>
<feature type="turn" evidence="8">
    <location>
        <begin position="371"/>
        <end position="373"/>
    </location>
</feature>
<feature type="strand" evidence="8">
    <location>
        <begin position="377"/>
        <end position="390"/>
    </location>
</feature>
<feature type="turn" evidence="8">
    <location>
        <begin position="394"/>
        <end position="396"/>
    </location>
</feature>
<feature type="strand" evidence="8">
    <location>
        <begin position="398"/>
        <end position="400"/>
    </location>
</feature>
<feature type="strand" evidence="8">
    <location>
        <begin position="408"/>
        <end position="410"/>
    </location>
</feature>
<feature type="helix" evidence="8">
    <location>
        <begin position="411"/>
        <end position="425"/>
    </location>
</feature>
<proteinExistence type="evidence at protein level"/>
<name>GDIA_BOVIN</name>
<comment type="function">
    <text evidence="4 5">Regulates the GDP/GTP exchange reaction of most Rab proteins by inhibiting the dissociation of GDP from them, and the subsequent binding of GTP to them. Promotes the dissociation of GDP-bound Rab proteins from the membrane and inhibits their activation. Promotes the dissociation of RAB1A, RAB3A, RAB5A and RAB10 from membranes.</text>
</comment>
<comment type="subunit">
    <text evidence="2 6">Interacts with RHOH (By similarity). Interacts with the non-phosphorylated forms of RAB1A, RAB3A, RAB5A, RAB5B, RAB5C, RAB8A, RAB8B, RAB10, RAB12, RAB35, and RAB43 (By similarity). Interacts with RAB3A (PubMed:8609986).</text>
</comment>
<comment type="subcellular location">
    <subcellularLocation>
        <location evidence="1">Cytoplasm</location>
    </subcellularLocation>
    <subcellularLocation>
        <location evidence="1">Golgi apparatus</location>
        <location evidence="1">trans-Golgi network</location>
    </subcellularLocation>
</comment>
<comment type="similarity">
    <text evidence="7">Belongs to the Rab GDI family.</text>
</comment>
<accession>P21856</accession>
<accession>A4FUY4</accession>
<sequence length="447" mass="50566">MDEEYDVIVLGTGLTECILSGIMSVNGKKVLHMDRNPYYGGESSSITPLEELYKRFQLLEGPPETMGRGRDWNVDLIPKFLMANGQLVKMLLYTEVTRYLDFKVVEGSFVYKGGKIYKVPSTETEALASNLMGMFEKRRFRKFLVFVANFDENDPKTFEGVDPQNTSMRDVYRKFDLGQDVIDFTGHALALYRTDDYLDQPCLETINRIKLYSESLARYGKSPYLYPLYGLGELPQGFARLSAIYGGTYMLNKPVDDIIMENGKVVGVKSEGEVARCKQLICDPSYVPDRVRKAGQVIRIICILSHPIKNTNDANSCQIIIPQNQVNRKSDIYVCMISYAHNVAAQGKYIAIASTTVETTDPEKEVEPALELLEPIDQKFVAISDLYEPIDDGSESQVFCSCSYDATTHFETTCNDIKDIYKRMAGSAFDFENMKRKQNDVFGEADQ</sequence>
<protein>
    <recommendedName>
        <fullName>Rab GDP dissociation inhibitor alpha</fullName>
        <shortName>Rab GDI alpha</shortName>
    </recommendedName>
    <alternativeName>
        <fullName>Guanosine diphosphate dissociation inhibitor 1</fullName>
        <shortName>GDI-1</shortName>
    </alternativeName>
    <alternativeName>
        <fullName>SMG p25A GDI</fullName>
    </alternativeName>
</protein>